<geneLocation type="mitochondrion"/>
<name>CYB_CANPA</name>
<sequence length="384" mass="43337">MPIRKSNTYLSLVNSYLIDSPQPSSINYWWNVGSLLGLCLVIQIASGIFLAMHYSSNIELAFNSVEHIMRDVNAGWLIRYIHANGASFFFICMYLHIGKALYYGSYKSPRVMLWVIGVIIFVVTMATAFMGYCLVYGQMSHWGATVITNLLSAIPFIGKDIVPFIWGGFSVSNPTIQRFFALHFLLPFILAALVCMHLMALHVNGSSNPLGITGNVDRLPMHPYFIFKDLVTVFVFLLVFSLFVFYSPNTLGHPDNYIPGNPLVTPPSIVPEWYLLPFYAILRSIPDKLGGVIAMFGAILILLTLPYTDRSFIRGNSFKVLSKFMFFLFLFNFILLGNLGQLHVEVPYIELGQYATAFYFAYYLLIVPAISSAENILYYIGTKK</sequence>
<proteinExistence type="inferred from homology"/>
<feature type="chain" id="PRO_0000061741" description="Cytochrome b">
    <location>
        <begin position="1"/>
        <end position="384"/>
    </location>
</feature>
<feature type="transmembrane region" description="Helical" evidence="3">
    <location>
        <begin position="32"/>
        <end position="52"/>
    </location>
</feature>
<feature type="transmembrane region" description="Helical" evidence="3">
    <location>
        <begin position="76"/>
        <end position="98"/>
    </location>
</feature>
<feature type="transmembrane region" description="Helical" evidence="3">
    <location>
        <begin position="113"/>
        <end position="133"/>
    </location>
</feature>
<feature type="transmembrane region" description="Helical" evidence="3">
    <location>
        <begin position="179"/>
        <end position="199"/>
    </location>
</feature>
<feature type="transmembrane region" description="Helical" evidence="3">
    <location>
        <begin position="225"/>
        <end position="245"/>
    </location>
</feature>
<feature type="transmembrane region" description="Helical" evidence="3">
    <location>
        <begin position="289"/>
        <end position="309"/>
    </location>
</feature>
<feature type="transmembrane region" description="Helical" evidence="3">
    <location>
        <begin position="321"/>
        <end position="341"/>
    </location>
</feature>
<feature type="transmembrane region" description="Helical" evidence="3">
    <location>
        <begin position="348"/>
        <end position="368"/>
    </location>
</feature>
<feature type="binding site" description="axial binding residue" evidence="5">
    <location>
        <position position="82"/>
    </location>
    <ligand>
        <name>heme b</name>
        <dbReference type="ChEBI" id="CHEBI:60344"/>
        <label>b562</label>
    </ligand>
    <ligandPart>
        <name>Fe</name>
        <dbReference type="ChEBI" id="CHEBI:18248"/>
    </ligandPart>
</feature>
<feature type="binding site" description="axial binding residue" evidence="5">
    <location>
        <position position="96"/>
    </location>
    <ligand>
        <name>heme b</name>
        <dbReference type="ChEBI" id="CHEBI:60344"/>
        <label>b566</label>
    </ligand>
    <ligandPart>
        <name>Fe</name>
        <dbReference type="ChEBI" id="CHEBI:18248"/>
    </ligandPart>
</feature>
<feature type="binding site" description="axial binding residue" evidence="5">
    <location>
        <position position="183"/>
    </location>
    <ligand>
        <name>heme b</name>
        <dbReference type="ChEBI" id="CHEBI:60344"/>
        <label>b562</label>
    </ligand>
    <ligandPart>
        <name>Fe</name>
        <dbReference type="ChEBI" id="CHEBI:18248"/>
    </ligandPart>
</feature>
<feature type="binding site" description="axial binding residue" evidence="5">
    <location>
        <position position="197"/>
    </location>
    <ligand>
        <name>heme b</name>
        <dbReference type="ChEBI" id="CHEBI:60344"/>
        <label>b566</label>
    </ligand>
    <ligandPart>
        <name>Fe</name>
        <dbReference type="ChEBI" id="CHEBI:18248"/>
    </ligandPart>
</feature>
<feature type="binding site" evidence="2">
    <location>
        <position position="202"/>
    </location>
    <ligand>
        <name>a ubiquinone</name>
        <dbReference type="ChEBI" id="CHEBI:16389"/>
    </ligand>
</feature>
<gene>
    <name type="primary">COB</name>
    <name type="synonym">CYTB</name>
</gene>
<organism>
    <name type="scientific">Candida parapsilosis</name>
    <name type="common">Yeast</name>
    <dbReference type="NCBI Taxonomy" id="5480"/>
    <lineage>
        <taxon>Eukaryota</taxon>
        <taxon>Fungi</taxon>
        <taxon>Dikarya</taxon>
        <taxon>Ascomycota</taxon>
        <taxon>Saccharomycotina</taxon>
        <taxon>Pichiomycetes</taxon>
        <taxon>Debaryomycetaceae</taxon>
        <taxon>Candida/Lodderomyces clade</taxon>
        <taxon>Candida</taxon>
    </lineage>
</organism>
<keyword id="KW-0249">Electron transport</keyword>
<keyword id="KW-0349">Heme</keyword>
<keyword id="KW-0408">Iron</keyword>
<keyword id="KW-0472">Membrane</keyword>
<keyword id="KW-0479">Metal-binding</keyword>
<keyword id="KW-0496">Mitochondrion</keyword>
<keyword id="KW-0999">Mitochondrion inner membrane</keyword>
<keyword id="KW-0679">Respiratory chain</keyword>
<keyword id="KW-0812">Transmembrane</keyword>
<keyword id="KW-1133">Transmembrane helix</keyword>
<keyword id="KW-0813">Transport</keyword>
<keyword id="KW-0830">Ubiquinone</keyword>
<comment type="function">
    <text evidence="3">Component of the ubiquinol-cytochrome c reductase complex (complex III or cytochrome b-c1 complex) that is part of the mitochondrial respiratory chain. The b-c1 complex mediates electron transfer from ubiquinol to cytochrome c. Contributes to the generation of a proton gradient across the mitochondrial membrane that is then used for ATP synthesis.</text>
</comment>
<comment type="cofactor">
    <cofactor evidence="3">
        <name>heme b</name>
        <dbReference type="ChEBI" id="CHEBI:60344"/>
    </cofactor>
    <text evidence="3">Binds 2 heme b groups non-covalently.</text>
</comment>
<comment type="subunit">
    <text evidence="3">Fungal cytochrome b-c1 complex contains 10 subunits; 3 respiratory subunits, 2 core proteins and 5 low-molecular weight proteins. Cytochrome b-c1 complex is a homodimer.</text>
</comment>
<comment type="subcellular location">
    <subcellularLocation>
        <location evidence="3">Mitochondrion inner membrane</location>
        <topology evidence="3">Multi-pass membrane protein</topology>
    </subcellularLocation>
</comment>
<comment type="miscellaneous">
    <text evidence="1">Heme 1 (or BL or b562) is low-potential and absorbs at about 562 nm, and heme 2 (or BH or b566) is high-potential and absorbs at about 566 nm.</text>
</comment>
<comment type="similarity">
    <text evidence="4 5">Belongs to the cytochrome b family.</text>
</comment>
<comment type="caution">
    <text evidence="3">The protein contains only eight transmembrane helices, not nine as predicted by bioinformatics tools.</text>
</comment>
<protein>
    <recommendedName>
        <fullName>Cytochrome b</fullName>
    </recommendedName>
    <alternativeName>
        <fullName>Complex III subunit 3</fullName>
    </alternativeName>
    <alternativeName>
        <fullName>Complex III subunit III</fullName>
    </alternativeName>
    <alternativeName>
        <fullName>Cytochrome b-c1 complex subunit 3</fullName>
    </alternativeName>
    <alternativeName>
        <fullName>Ubiquinol-cytochrome-c reductase complex cytochrome b subunit</fullName>
    </alternativeName>
</protein>
<accession>Q7GEV4</accession>
<reference key="1">
    <citation type="journal article" date="2004" name="Mol. Genet. Genomics">
        <title>Complete DNA sequence of the linear mitochondrial genome of the pathogenic yeast Candida parapsilosis.</title>
        <authorList>
            <person name="Nosek J."/>
            <person name="Novotna M."/>
            <person name="Hlavatovicova Z."/>
            <person name="Ussery D.W."/>
            <person name="Fajkus J."/>
            <person name="Tomaska L."/>
        </authorList>
    </citation>
    <scope>NUCLEOTIDE SEQUENCE [LARGE SCALE GENOMIC DNA]</scope>
    <source>
        <strain>SR23 / CBS 7157</strain>
    </source>
</reference>
<evidence type="ECO:0000250" key="1"/>
<evidence type="ECO:0000250" key="2">
    <source>
        <dbReference type="UniProtKB" id="P00157"/>
    </source>
</evidence>
<evidence type="ECO:0000250" key="3">
    <source>
        <dbReference type="UniProtKB" id="P00163"/>
    </source>
</evidence>
<evidence type="ECO:0000255" key="4">
    <source>
        <dbReference type="PROSITE-ProRule" id="PRU00967"/>
    </source>
</evidence>
<evidence type="ECO:0000255" key="5">
    <source>
        <dbReference type="PROSITE-ProRule" id="PRU00968"/>
    </source>
</evidence>
<dbReference type="EMBL" id="X74411">
    <property type="protein sequence ID" value="CAE54595.1"/>
    <property type="molecule type" value="Genomic_DNA"/>
</dbReference>
<dbReference type="RefSeq" id="NP_943632.1">
    <property type="nucleotide sequence ID" value="NC_005253.2"/>
</dbReference>
<dbReference type="SMR" id="Q7GEV4"/>
<dbReference type="GeneID" id="2657775"/>
<dbReference type="CGD" id="CAL0000145068">
    <property type="gene designation" value="CapafMp03"/>
</dbReference>
<dbReference type="VEuPathDB" id="FungiDB:CapafMp03"/>
<dbReference type="GO" id="GO:0005743">
    <property type="term" value="C:mitochondrial inner membrane"/>
    <property type="evidence" value="ECO:0007669"/>
    <property type="project" value="UniProtKB-SubCell"/>
</dbReference>
<dbReference type="GO" id="GO:0045275">
    <property type="term" value="C:respiratory chain complex III"/>
    <property type="evidence" value="ECO:0007669"/>
    <property type="project" value="InterPro"/>
</dbReference>
<dbReference type="GO" id="GO:0046872">
    <property type="term" value="F:metal ion binding"/>
    <property type="evidence" value="ECO:0007669"/>
    <property type="project" value="UniProtKB-KW"/>
</dbReference>
<dbReference type="GO" id="GO:0008121">
    <property type="term" value="F:ubiquinol-cytochrome-c reductase activity"/>
    <property type="evidence" value="ECO:0007669"/>
    <property type="project" value="InterPro"/>
</dbReference>
<dbReference type="GO" id="GO:0006122">
    <property type="term" value="P:mitochondrial electron transport, ubiquinol to cytochrome c"/>
    <property type="evidence" value="ECO:0007669"/>
    <property type="project" value="TreeGrafter"/>
</dbReference>
<dbReference type="CDD" id="cd00290">
    <property type="entry name" value="cytochrome_b_C"/>
    <property type="match status" value="1"/>
</dbReference>
<dbReference type="CDD" id="cd00284">
    <property type="entry name" value="Cytochrome_b_N"/>
    <property type="match status" value="1"/>
</dbReference>
<dbReference type="FunFam" id="1.20.810.10:FF:000002">
    <property type="entry name" value="Cytochrome b"/>
    <property type="match status" value="1"/>
</dbReference>
<dbReference type="Gene3D" id="1.20.810.10">
    <property type="entry name" value="Cytochrome Bc1 Complex, Chain C"/>
    <property type="match status" value="1"/>
</dbReference>
<dbReference type="InterPro" id="IPR005798">
    <property type="entry name" value="Cyt_b/b6_C"/>
</dbReference>
<dbReference type="InterPro" id="IPR036150">
    <property type="entry name" value="Cyt_b/b6_C_sf"/>
</dbReference>
<dbReference type="InterPro" id="IPR005797">
    <property type="entry name" value="Cyt_b/b6_N"/>
</dbReference>
<dbReference type="InterPro" id="IPR027387">
    <property type="entry name" value="Cytb/b6-like_sf"/>
</dbReference>
<dbReference type="InterPro" id="IPR030689">
    <property type="entry name" value="Cytochrome_b"/>
</dbReference>
<dbReference type="InterPro" id="IPR048260">
    <property type="entry name" value="Cytochrome_b_C_euk/bac"/>
</dbReference>
<dbReference type="InterPro" id="IPR048259">
    <property type="entry name" value="Cytochrome_b_N_euk/bac"/>
</dbReference>
<dbReference type="InterPro" id="IPR016174">
    <property type="entry name" value="Di-haem_cyt_TM"/>
</dbReference>
<dbReference type="PANTHER" id="PTHR19271">
    <property type="entry name" value="CYTOCHROME B"/>
    <property type="match status" value="1"/>
</dbReference>
<dbReference type="PANTHER" id="PTHR19271:SF16">
    <property type="entry name" value="CYTOCHROME B"/>
    <property type="match status" value="1"/>
</dbReference>
<dbReference type="Pfam" id="PF00032">
    <property type="entry name" value="Cytochrom_B_C"/>
    <property type="match status" value="1"/>
</dbReference>
<dbReference type="Pfam" id="PF00033">
    <property type="entry name" value="Cytochrome_B"/>
    <property type="match status" value="1"/>
</dbReference>
<dbReference type="PIRSF" id="PIRSF038885">
    <property type="entry name" value="COB"/>
    <property type="match status" value="1"/>
</dbReference>
<dbReference type="SUPFAM" id="SSF81648">
    <property type="entry name" value="a domain/subunit of cytochrome bc1 complex (Ubiquinol-cytochrome c reductase)"/>
    <property type="match status" value="1"/>
</dbReference>
<dbReference type="SUPFAM" id="SSF81342">
    <property type="entry name" value="Transmembrane di-heme cytochromes"/>
    <property type="match status" value="1"/>
</dbReference>
<dbReference type="PROSITE" id="PS51003">
    <property type="entry name" value="CYTB_CTER"/>
    <property type="match status" value="1"/>
</dbReference>
<dbReference type="PROSITE" id="PS51002">
    <property type="entry name" value="CYTB_NTER"/>
    <property type="match status" value="1"/>
</dbReference>